<dbReference type="EC" id="5.1.99.6"/>
<dbReference type="EMBL" id="CH672346">
    <property type="protein sequence ID" value="EEQ42936.1"/>
    <property type="status" value="ALT_INIT"/>
    <property type="molecule type" value="Genomic_DNA"/>
</dbReference>
<dbReference type="SMR" id="C4YF50"/>
<dbReference type="PaxDb" id="5476-C4YF50"/>
<dbReference type="HOGENOM" id="CLU_024853_3_0_1"/>
<dbReference type="OrthoDB" id="6429at766764"/>
<dbReference type="Proteomes" id="UP000001429">
    <property type="component" value="Chromosome 1, Supercontig 1.1"/>
</dbReference>
<dbReference type="GO" id="GO:0005739">
    <property type="term" value="C:mitochondrion"/>
    <property type="evidence" value="ECO:0007669"/>
    <property type="project" value="UniProtKB-SubCell"/>
</dbReference>
<dbReference type="GO" id="GO:0046872">
    <property type="term" value="F:metal ion binding"/>
    <property type="evidence" value="ECO:0007669"/>
    <property type="project" value="UniProtKB-KW"/>
</dbReference>
<dbReference type="GO" id="GO:0052856">
    <property type="term" value="F:NAD(P)HX epimerase activity"/>
    <property type="evidence" value="ECO:0007669"/>
    <property type="project" value="UniProtKB-UniRule"/>
</dbReference>
<dbReference type="GO" id="GO:0000166">
    <property type="term" value="F:nucleotide binding"/>
    <property type="evidence" value="ECO:0007669"/>
    <property type="project" value="UniProtKB-KW"/>
</dbReference>
<dbReference type="FunFam" id="3.40.50.10260:FF:000005">
    <property type="entry name" value="NAD(P)H-hydrate epimerase"/>
    <property type="match status" value="1"/>
</dbReference>
<dbReference type="Gene3D" id="3.40.50.10260">
    <property type="entry name" value="YjeF N-terminal domain"/>
    <property type="match status" value="1"/>
</dbReference>
<dbReference type="HAMAP" id="MF_01966">
    <property type="entry name" value="NADHX_epimerase"/>
    <property type="match status" value="1"/>
</dbReference>
<dbReference type="InterPro" id="IPR004443">
    <property type="entry name" value="YjeF_N_dom"/>
</dbReference>
<dbReference type="InterPro" id="IPR036652">
    <property type="entry name" value="YjeF_N_dom_sf"/>
</dbReference>
<dbReference type="InterPro" id="IPR032976">
    <property type="entry name" value="YJEFN_prot_NAXE-like"/>
</dbReference>
<dbReference type="NCBIfam" id="TIGR00197">
    <property type="entry name" value="yjeF_nterm"/>
    <property type="match status" value="1"/>
</dbReference>
<dbReference type="PANTHER" id="PTHR13232">
    <property type="entry name" value="NAD(P)H-HYDRATE EPIMERASE"/>
    <property type="match status" value="1"/>
</dbReference>
<dbReference type="PANTHER" id="PTHR13232:SF10">
    <property type="entry name" value="NAD(P)H-HYDRATE EPIMERASE"/>
    <property type="match status" value="1"/>
</dbReference>
<dbReference type="Pfam" id="PF03853">
    <property type="entry name" value="YjeF_N"/>
    <property type="match status" value="1"/>
</dbReference>
<dbReference type="SUPFAM" id="SSF64153">
    <property type="entry name" value="YjeF N-terminal domain-like"/>
    <property type="match status" value="1"/>
</dbReference>
<dbReference type="PROSITE" id="PS51385">
    <property type="entry name" value="YJEF_N"/>
    <property type="match status" value="1"/>
</dbReference>
<protein>
    <recommendedName>
        <fullName evidence="1">NAD(P)H-hydrate epimerase</fullName>
        <ecNumber>5.1.99.6</ecNumber>
    </recommendedName>
    <alternativeName>
        <fullName evidence="1">NAD(P)HX epimerase</fullName>
    </alternativeName>
</protein>
<proteinExistence type="inferred from homology"/>
<evidence type="ECO:0000255" key="1">
    <source>
        <dbReference type="HAMAP-Rule" id="MF_03159"/>
    </source>
</evidence>
<evidence type="ECO:0000305" key="2"/>
<keyword id="KW-0963">Cytoplasm</keyword>
<keyword id="KW-0413">Isomerase</keyword>
<keyword id="KW-0479">Metal-binding</keyword>
<keyword id="KW-0496">Mitochondrion</keyword>
<keyword id="KW-0520">NAD</keyword>
<keyword id="KW-0521">NADP</keyword>
<keyword id="KW-0547">Nucleotide-binding</keyword>
<keyword id="KW-0630">Potassium</keyword>
<reference key="1">
    <citation type="journal article" date="2009" name="Nature">
        <title>Evolution of pathogenicity and sexual reproduction in eight Candida genomes.</title>
        <authorList>
            <person name="Butler G."/>
            <person name="Rasmussen M.D."/>
            <person name="Lin M.F."/>
            <person name="Santos M.A.S."/>
            <person name="Sakthikumar S."/>
            <person name="Munro C.A."/>
            <person name="Rheinbay E."/>
            <person name="Grabherr M."/>
            <person name="Forche A."/>
            <person name="Reedy J.L."/>
            <person name="Agrafioti I."/>
            <person name="Arnaud M.B."/>
            <person name="Bates S."/>
            <person name="Brown A.J.P."/>
            <person name="Brunke S."/>
            <person name="Costanzo M.C."/>
            <person name="Fitzpatrick D.A."/>
            <person name="de Groot P.W.J."/>
            <person name="Harris D."/>
            <person name="Hoyer L.L."/>
            <person name="Hube B."/>
            <person name="Klis F.M."/>
            <person name="Kodira C."/>
            <person name="Lennard N."/>
            <person name="Logue M.E."/>
            <person name="Martin R."/>
            <person name="Neiman A.M."/>
            <person name="Nikolaou E."/>
            <person name="Quail M.A."/>
            <person name="Quinn J."/>
            <person name="Santos M.C."/>
            <person name="Schmitzberger F.F."/>
            <person name="Sherlock G."/>
            <person name="Shah P."/>
            <person name="Silverstein K.A.T."/>
            <person name="Skrzypek M.S."/>
            <person name="Soll D."/>
            <person name="Staggs R."/>
            <person name="Stansfield I."/>
            <person name="Stumpf M.P.H."/>
            <person name="Sudbery P.E."/>
            <person name="Srikantha T."/>
            <person name="Zeng Q."/>
            <person name="Berman J."/>
            <person name="Berriman M."/>
            <person name="Heitman J."/>
            <person name="Gow N.A.R."/>
            <person name="Lorenz M.C."/>
            <person name="Birren B.W."/>
            <person name="Kellis M."/>
            <person name="Cuomo C.A."/>
        </authorList>
    </citation>
    <scope>NUCLEOTIDE SEQUENCE [LARGE SCALE GENOMIC DNA]</scope>
    <source>
        <strain>WO-1</strain>
    </source>
</reference>
<feature type="chain" id="PRO_0000416332" description="NAD(P)H-hydrate epimerase">
    <location>
        <begin position="1"/>
        <end position="258"/>
    </location>
</feature>
<feature type="domain" description="YjeF N-terminal" evidence="1">
    <location>
        <begin position="15"/>
        <end position="244"/>
    </location>
</feature>
<feature type="binding site" evidence="1">
    <location>
        <begin position="75"/>
        <end position="79"/>
    </location>
    <ligand>
        <name>(6S)-NADPHX</name>
        <dbReference type="ChEBI" id="CHEBI:64076"/>
    </ligand>
</feature>
<feature type="binding site" evidence="1">
    <location>
        <position position="76"/>
    </location>
    <ligand>
        <name>K(+)</name>
        <dbReference type="ChEBI" id="CHEBI:29103"/>
    </ligand>
</feature>
<feature type="binding site" evidence="1">
    <location>
        <position position="145"/>
    </location>
    <ligand>
        <name>K(+)</name>
        <dbReference type="ChEBI" id="CHEBI:29103"/>
    </ligand>
</feature>
<feature type="binding site" evidence="1">
    <location>
        <begin position="149"/>
        <end position="155"/>
    </location>
    <ligand>
        <name>(6S)-NADPHX</name>
        <dbReference type="ChEBI" id="CHEBI:64076"/>
    </ligand>
</feature>
<feature type="binding site" evidence="1">
    <location>
        <position position="181"/>
    </location>
    <ligand>
        <name>(6S)-NADPHX</name>
        <dbReference type="ChEBI" id="CHEBI:64076"/>
    </ligand>
</feature>
<feature type="binding site" evidence="1">
    <location>
        <position position="184"/>
    </location>
    <ligand>
        <name>K(+)</name>
        <dbReference type="ChEBI" id="CHEBI:29103"/>
    </ligand>
</feature>
<accession>C4YF50</accession>
<gene>
    <name type="ORF">CAWG_01161</name>
</gene>
<comment type="function">
    <text evidence="1">Catalyzes the epimerization of the S- and R-forms of NAD(P)HX, a damaged form of NAD(P)H that is a result of enzymatic or heat-dependent hydration. This is a prerequisite for the S-specific NAD(P)H-hydrate dehydratase to allow the repair of both epimers of NAD(P)HX.</text>
</comment>
<comment type="catalytic activity">
    <reaction>
        <text>(6R)-NADHX = (6S)-NADHX</text>
        <dbReference type="Rhea" id="RHEA:32215"/>
        <dbReference type="ChEBI" id="CHEBI:64074"/>
        <dbReference type="ChEBI" id="CHEBI:64075"/>
        <dbReference type="EC" id="5.1.99.6"/>
    </reaction>
</comment>
<comment type="catalytic activity">
    <reaction>
        <text>(6R)-NADPHX = (6S)-NADPHX</text>
        <dbReference type="Rhea" id="RHEA:32227"/>
        <dbReference type="ChEBI" id="CHEBI:64076"/>
        <dbReference type="ChEBI" id="CHEBI:64077"/>
        <dbReference type="EC" id="5.1.99.6"/>
    </reaction>
</comment>
<comment type="cofactor">
    <cofactor evidence="1">
        <name>K(+)</name>
        <dbReference type="ChEBI" id="CHEBI:29103"/>
    </cofactor>
    <text evidence="1">Binds 1 potassium ion per subunit.</text>
</comment>
<comment type="subcellular location">
    <subcellularLocation>
        <location evidence="1">Cytoplasm</location>
    </subcellularLocation>
    <subcellularLocation>
        <location evidence="1">Mitochondrion</location>
    </subcellularLocation>
</comment>
<comment type="similarity">
    <text evidence="1">Belongs to the NnrE/AIBP family.</text>
</comment>
<comment type="sequence caution" evidence="2">
    <conflict type="erroneous initiation">
        <sequence resource="EMBL-CDS" id="EEQ42936"/>
    </conflict>
    <text>Extended N-terminus.</text>
</comment>
<organism>
    <name type="scientific">Candida albicans (strain WO-1)</name>
    <name type="common">Yeast</name>
    <dbReference type="NCBI Taxonomy" id="294748"/>
    <lineage>
        <taxon>Eukaryota</taxon>
        <taxon>Fungi</taxon>
        <taxon>Dikarya</taxon>
        <taxon>Ascomycota</taxon>
        <taxon>Saccharomycotina</taxon>
        <taxon>Pichiomycetes</taxon>
        <taxon>Debaryomycetaceae</taxon>
        <taxon>Candida/Lodderomyces clade</taxon>
        <taxon>Candida</taxon>
    </lineage>
</organism>
<sequence length="258" mass="28710">MSATAPFKTLSAKAAFQLDQELMSTGEFSIDQLMELAGLAVAKTIYKEYPPNETTTTTKNKFNPNKVLVLVGPGNNGGDGLVAARHLKLWNYDPIIYYPKRPASNQLYSRLIKQLQDLNVPELTTLTEVKHLLDSRDSKIKIIIDSIFGFSFKPPIREPFKDLINYLGQNHDHLPPIVSVDIPSGWDVDEGPGTEIDIQASCLISLTAPKPCAKLFVNSGPDKIHYLGGRFINPRIAKEYGIEDIVNKYQGDELIVKL</sequence>
<name>NNRE_CANAW</name>